<organism>
    <name type="scientific">Mesomycoplasma hyopneumoniae (strain 232)</name>
    <name type="common">Mycoplasma hyopneumoniae</name>
    <dbReference type="NCBI Taxonomy" id="295358"/>
    <lineage>
        <taxon>Bacteria</taxon>
        <taxon>Bacillati</taxon>
        <taxon>Mycoplasmatota</taxon>
        <taxon>Mycoplasmoidales</taxon>
        <taxon>Metamycoplasmataceae</taxon>
        <taxon>Mesomycoplasma</taxon>
    </lineage>
</organism>
<name>RSMA_MESH2</name>
<accession>Q5ZZN4</accession>
<evidence type="ECO:0000255" key="1">
    <source>
        <dbReference type="HAMAP-Rule" id="MF_00607"/>
    </source>
</evidence>
<sequence>MQKPVPKKRLGQNFLKDRKIAEKIVENIDLKNKEIIEIGCGTGFLTNFLLEKAKFVTCYEIDKNLIPILEKKFKNKNLRIINEDFLLAEFESKEKKTIIANLPYYITSKILFKIFANFEKFDKIILMVQNEVADRIVAKPKTPTYSKLSLASQYIAKVRKLFVVGPDSFFPKPKVNSAVVSFDFRANLDAKEMENFFWFTKRCFQFKRKTLYNNLIFFLNKQQIEKIYNFFQFAQNIRPQQLDLVTYIRLADFYFNNIF</sequence>
<feature type="chain" id="PRO_0000101560" description="Ribosomal RNA small subunit methyltransferase A">
    <location>
        <begin position="1"/>
        <end position="259"/>
    </location>
</feature>
<feature type="binding site" evidence="1">
    <location>
        <position position="13"/>
    </location>
    <ligand>
        <name>S-adenosyl-L-methionine</name>
        <dbReference type="ChEBI" id="CHEBI:59789"/>
    </ligand>
</feature>
<feature type="binding site" evidence="1">
    <location>
        <position position="15"/>
    </location>
    <ligand>
        <name>S-adenosyl-L-methionine</name>
        <dbReference type="ChEBI" id="CHEBI:59789"/>
    </ligand>
</feature>
<feature type="binding site" evidence="1">
    <location>
        <position position="39"/>
    </location>
    <ligand>
        <name>S-adenosyl-L-methionine</name>
        <dbReference type="ChEBI" id="CHEBI:59789"/>
    </ligand>
</feature>
<feature type="binding site" evidence="1">
    <location>
        <position position="60"/>
    </location>
    <ligand>
        <name>S-adenosyl-L-methionine</name>
        <dbReference type="ChEBI" id="CHEBI:59789"/>
    </ligand>
</feature>
<feature type="binding site" evidence="1">
    <location>
        <position position="84"/>
    </location>
    <ligand>
        <name>S-adenosyl-L-methionine</name>
        <dbReference type="ChEBI" id="CHEBI:59789"/>
    </ligand>
</feature>
<feature type="binding site" evidence="1">
    <location>
        <position position="101"/>
    </location>
    <ligand>
        <name>S-adenosyl-L-methionine</name>
        <dbReference type="ChEBI" id="CHEBI:59789"/>
    </ligand>
</feature>
<comment type="function">
    <text evidence="1">Specifically dimethylates two adjacent adenosines (A1518 and A1519) in the loop of a conserved hairpin near the 3'-end of 16S rRNA in the 30S particle. May play a critical role in biogenesis of 30S subunits.</text>
</comment>
<comment type="catalytic activity">
    <reaction evidence="1">
        <text>adenosine(1518)/adenosine(1519) in 16S rRNA + 4 S-adenosyl-L-methionine = N(6)-dimethyladenosine(1518)/N(6)-dimethyladenosine(1519) in 16S rRNA + 4 S-adenosyl-L-homocysteine + 4 H(+)</text>
        <dbReference type="Rhea" id="RHEA:19609"/>
        <dbReference type="Rhea" id="RHEA-COMP:10232"/>
        <dbReference type="Rhea" id="RHEA-COMP:10233"/>
        <dbReference type="ChEBI" id="CHEBI:15378"/>
        <dbReference type="ChEBI" id="CHEBI:57856"/>
        <dbReference type="ChEBI" id="CHEBI:59789"/>
        <dbReference type="ChEBI" id="CHEBI:74411"/>
        <dbReference type="ChEBI" id="CHEBI:74493"/>
        <dbReference type="EC" id="2.1.1.182"/>
    </reaction>
</comment>
<comment type="subcellular location">
    <subcellularLocation>
        <location evidence="1">Cytoplasm</location>
    </subcellularLocation>
</comment>
<comment type="similarity">
    <text evidence="1">Belongs to the class I-like SAM-binding methyltransferase superfamily. rRNA adenine N(6)-methyltransferase family. RsmA subfamily.</text>
</comment>
<protein>
    <recommendedName>
        <fullName evidence="1">Ribosomal RNA small subunit methyltransferase A</fullName>
        <ecNumber evidence="1">2.1.1.182</ecNumber>
    </recommendedName>
    <alternativeName>
        <fullName evidence="1">16S rRNA (adenine(1518)-N(6)/adenine(1519)-N(6))-dimethyltransferase</fullName>
    </alternativeName>
    <alternativeName>
        <fullName evidence="1">16S rRNA dimethyladenosine transferase</fullName>
    </alternativeName>
    <alternativeName>
        <fullName evidence="1">16S rRNA dimethylase</fullName>
    </alternativeName>
    <alternativeName>
        <fullName evidence="1">S-adenosylmethionine-6-N', N'-adenosyl(rRNA) dimethyltransferase</fullName>
    </alternativeName>
</protein>
<reference key="1">
    <citation type="journal article" date="2004" name="J. Bacteriol.">
        <title>The genome sequence of Mycoplasma hyopneumoniae strain 232, the agent of swine mycoplasmosis.</title>
        <authorList>
            <person name="Minion F.C."/>
            <person name="Lefkowitz E.J."/>
            <person name="Madsen M.L."/>
            <person name="Cleary B.J."/>
            <person name="Swartzell S.M."/>
            <person name="Mahairas G.G."/>
        </authorList>
    </citation>
    <scope>NUCLEOTIDE SEQUENCE [LARGE SCALE GENOMIC DNA]</scope>
    <source>
        <strain>232</strain>
    </source>
</reference>
<dbReference type="EC" id="2.1.1.182" evidence="1"/>
<dbReference type="EMBL" id="AE017332">
    <property type="protein sequence ID" value="AAV28026.1"/>
    <property type="molecule type" value="Genomic_DNA"/>
</dbReference>
<dbReference type="RefSeq" id="WP_011206504.1">
    <property type="nucleotide sequence ID" value="NC_006360.1"/>
</dbReference>
<dbReference type="SMR" id="Q5ZZN4"/>
<dbReference type="KEGG" id="mhy:mhp673"/>
<dbReference type="eggNOG" id="COG0030">
    <property type="taxonomic scope" value="Bacteria"/>
</dbReference>
<dbReference type="HOGENOM" id="CLU_041220_0_1_14"/>
<dbReference type="PhylomeDB" id="Q5ZZN4"/>
<dbReference type="Proteomes" id="UP000006822">
    <property type="component" value="Chromosome"/>
</dbReference>
<dbReference type="GO" id="GO:0005829">
    <property type="term" value="C:cytosol"/>
    <property type="evidence" value="ECO:0007669"/>
    <property type="project" value="TreeGrafter"/>
</dbReference>
<dbReference type="GO" id="GO:0052908">
    <property type="term" value="F:16S rRNA (adenine(1518)-N(6)/adenine(1519)-N(6))-dimethyltransferase activity"/>
    <property type="evidence" value="ECO:0007669"/>
    <property type="project" value="UniProtKB-EC"/>
</dbReference>
<dbReference type="GO" id="GO:0003723">
    <property type="term" value="F:RNA binding"/>
    <property type="evidence" value="ECO:0007669"/>
    <property type="project" value="UniProtKB-KW"/>
</dbReference>
<dbReference type="CDD" id="cd02440">
    <property type="entry name" value="AdoMet_MTases"/>
    <property type="match status" value="1"/>
</dbReference>
<dbReference type="Gene3D" id="1.10.8.100">
    <property type="entry name" value="Ribosomal RNA adenine dimethylase-like, domain 2"/>
    <property type="match status" value="1"/>
</dbReference>
<dbReference type="Gene3D" id="3.40.50.150">
    <property type="entry name" value="Vaccinia Virus protein VP39"/>
    <property type="match status" value="1"/>
</dbReference>
<dbReference type="HAMAP" id="MF_00607">
    <property type="entry name" value="16SrRNA_methyltr_A"/>
    <property type="match status" value="1"/>
</dbReference>
<dbReference type="InterPro" id="IPR001737">
    <property type="entry name" value="KsgA/Erm"/>
</dbReference>
<dbReference type="InterPro" id="IPR023165">
    <property type="entry name" value="rRNA_Ade_diMease-like_C"/>
</dbReference>
<dbReference type="InterPro" id="IPR020596">
    <property type="entry name" value="rRNA_Ade_Mease_Trfase_CS"/>
</dbReference>
<dbReference type="InterPro" id="IPR020598">
    <property type="entry name" value="rRNA_Ade_methylase_Trfase_N"/>
</dbReference>
<dbReference type="InterPro" id="IPR011530">
    <property type="entry name" value="rRNA_adenine_dimethylase"/>
</dbReference>
<dbReference type="InterPro" id="IPR029063">
    <property type="entry name" value="SAM-dependent_MTases_sf"/>
</dbReference>
<dbReference type="NCBIfam" id="TIGR00755">
    <property type="entry name" value="ksgA"/>
    <property type="match status" value="1"/>
</dbReference>
<dbReference type="PANTHER" id="PTHR11727">
    <property type="entry name" value="DIMETHYLADENOSINE TRANSFERASE"/>
    <property type="match status" value="1"/>
</dbReference>
<dbReference type="PANTHER" id="PTHR11727:SF7">
    <property type="entry name" value="DIMETHYLADENOSINE TRANSFERASE-RELATED"/>
    <property type="match status" value="1"/>
</dbReference>
<dbReference type="Pfam" id="PF00398">
    <property type="entry name" value="RrnaAD"/>
    <property type="match status" value="1"/>
</dbReference>
<dbReference type="SMART" id="SM00650">
    <property type="entry name" value="rADc"/>
    <property type="match status" value="1"/>
</dbReference>
<dbReference type="SUPFAM" id="SSF53335">
    <property type="entry name" value="S-adenosyl-L-methionine-dependent methyltransferases"/>
    <property type="match status" value="1"/>
</dbReference>
<dbReference type="PROSITE" id="PS01131">
    <property type="entry name" value="RRNA_A_DIMETH"/>
    <property type="match status" value="1"/>
</dbReference>
<dbReference type="PROSITE" id="PS51689">
    <property type="entry name" value="SAM_RNA_A_N6_MT"/>
    <property type="match status" value="1"/>
</dbReference>
<gene>
    <name evidence="1" type="primary">rsmA</name>
    <name evidence="1" type="synonym">ksgA</name>
    <name type="ordered locus">mhp673</name>
</gene>
<proteinExistence type="inferred from homology"/>
<keyword id="KW-0963">Cytoplasm</keyword>
<keyword id="KW-0489">Methyltransferase</keyword>
<keyword id="KW-0694">RNA-binding</keyword>
<keyword id="KW-0698">rRNA processing</keyword>
<keyword id="KW-0949">S-adenosyl-L-methionine</keyword>
<keyword id="KW-0808">Transferase</keyword>